<name>FLIE_BURCJ</name>
<organism>
    <name type="scientific">Burkholderia cenocepacia (strain ATCC BAA-245 / DSM 16553 / LMG 16656 / NCTC 13227 / J2315 / CF5610)</name>
    <name type="common">Burkholderia cepacia (strain J2315)</name>
    <dbReference type="NCBI Taxonomy" id="216591"/>
    <lineage>
        <taxon>Bacteria</taxon>
        <taxon>Pseudomonadati</taxon>
        <taxon>Pseudomonadota</taxon>
        <taxon>Betaproteobacteria</taxon>
        <taxon>Burkholderiales</taxon>
        <taxon>Burkholderiaceae</taxon>
        <taxon>Burkholderia</taxon>
        <taxon>Burkholderia cepacia complex</taxon>
    </lineage>
</organism>
<keyword id="KW-0975">Bacterial flagellum</keyword>
<protein>
    <recommendedName>
        <fullName evidence="1">Flagellar hook-basal body complex protein FliE</fullName>
    </recommendedName>
</protein>
<gene>
    <name evidence="1" type="primary">fliE</name>
    <name type="ordered locus">BceJ2315_05230</name>
    <name type="ORF">BCAL0526</name>
</gene>
<proteinExistence type="inferred from homology"/>
<evidence type="ECO:0000255" key="1">
    <source>
        <dbReference type="HAMAP-Rule" id="MF_00724"/>
    </source>
</evidence>
<comment type="subcellular location">
    <subcellularLocation>
        <location evidence="1">Bacterial flagellum basal body</location>
    </subcellularLocation>
</comment>
<comment type="similarity">
    <text evidence="1">Belongs to the FliE family.</text>
</comment>
<reference key="1">
    <citation type="submission" date="2001-11" db="EMBL/GenBank/DDBJ databases">
        <title>Role of flagella in Burkholderia cepacia host cell invasion.</title>
        <authorList>
            <person name="Tomich M."/>
            <person name="Herfst C.A."/>
            <person name="Golden J.W."/>
            <person name="Mohr C.D."/>
        </authorList>
    </citation>
    <scope>NUCLEOTIDE SEQUENCE [GENOMIC DNA]</scope>
</reference>
<reference key="2">
    <citation type="journal article" date="2009" name="J. Bacteriol.">
        <title>The genome of Burkholderia cenocepacia J2315, an epidemic pathogen of cystic fibrosis patients.</title>
        <authorList>
            <person name="Holden M.T."/>
            <person name="Seth-Smith H.M."/>
            <person name="Crossman L.C."/>
            <person name="Sebaihia M."/>
            <person name="Bentley S.D."/>
            <person name="Cerdeno-Tarraga A.M."/>
            <person name="Thomson N.R."/>
            <person name="Bason N."/>
            <person name="Quail M.A."/>
            <person name="Sharp S."/>
            <person name="Cherevach I."/>
            <person name="Churcher C."/>
            <person name="Goodhead I."/>
            <person name="Hauser H."/>
            <person name="Holroyd N."/>
            <person name="Mungall K."/>
            <person name="Scott P."/>
            <person name="Walker D."/>
            <person name="White B."/>
            <person name="Rose H."/>
            <person name="Iversen P."/>
            <person name="Mil-Homens D."/>
            <person name="Rocha E.P."/>
            <person name="Fialho A.M."/>
            <person name="Baldwin A."/>
            <person name="Dowson C."/>
            <person name="Barrell B.G."/>
            <person name="Govan J.R."/>
            <person name="Vandamme P."/>
            <person name="Hart C.A."/>
            <person name="Mahenthiralingam E."/>
            <person name="Parkhill J."/>
        </authorList>
    </citation>
    <scope>NUCLEOTIDE SEQUENCE [LARGE SCALE GENOMIC DNA]</scope>
    <source>
        <strain>ATCC BAA-245 / DSM 16553 / LMG 16656 / NCTC 13227 / J2315 / CF5610</strain>
    </source>
</reference>
<accession>Q8VQP8</accession>
<accession>B4E817</accession>
<sequence length="114" mass="11553">MTANVSGIGSVLQQMQSMAAQASGGVASPTAALAGSGAATAGTFASAMKASLDKISGDQQHALGEAKAFEVGAPNISLNDVMVDMQKANIGFQFGLQVRNKLVSAYNDIMQMSV</sequence>
<dbReference type="EMBL" id="AF453480">
    <property type="protein sequence ID" value="AAL65159.1"/>
    <property type="molecule type" value="Genomic_DNA"/>
</dbReference>
<dbReference type="EMBL" id="AM747720">
    <property type="protein sequence ID" value="CAR50836.1"/>
    <property type="molecule type" value="Genomic_DNA"/>
</dbReference>
<dbReference type="RefSeq" id="WP_006486991.1">
    <property type="nucleotide sequence ID" value="NC_011000.1"/>
</dbReference>
<dbReference type="SMR" id="Q8VQP8"/>
<dbReference type="GeneID" id="83049862"/>
<dbReference type="KEGG" id="bcj:BCAL0526"/>
<dbReference type="eggNOG" id="COG1677">
    <property type="taxonomic scope" value="Bacteria"/>
</dbReference>
<dbReference type="HOGENOM" id="CLU_147249_0_2_4"/>
<dbReference type="BioCyc" id="BCEN216591:G1G1V-602-MONOMER"/>
<dbReference type="Proteomes" id="UP000001035">
    <property type="component" value="Chromosome 1"/>
</dbReference>
<dbReference type="GO" id="GO:0009425">
    <property type="term" value="C:bacterial-type flagellum basal body"/>
    <property type="evidence" value="ECO:0007669"/>
    <property type="project" value="UniProtKB-SubCell"/>
</dbReference>
<dbReference type="GO" id="GO:0003774">
    <property type="term" value="F:cytoskeletal motor activity"/>
    <property type="evidence" value="ECO:0007669"/>
    <property type="project" value="InterPro"/>
</dbReference>
<dbReference type="GO" id="GO:0005198">
    <property type="term" value="F:structural molecule activity"/>
    <property type="evidence" value="ECO:0007669"/>
    <property type="project" value="InterPro"/>
</dbReference>
<dbReference type="GO" id="GO:0071973">
    <property type="term" value="P:bacterial-type flagellum-dependent cell motility"/>
    <property type="evidence" value="ECO:0007669"/>
    <property type="project" value="InterPro"/>
</dbReference>
<dbReference type="HAMAP" id="MF_00724">
    <property type="entry name" value="FliE"/>
    <property type="match status" value="1"/>
</dbReference>
<dbReference type="InterPro" id="IPR001624">
    <property type="entry name" value="FliE"/>
</dbReference>
<dbReference type="NCBIfam" id="TIGR00205">
    <property type="entry name" value="fliE"/>
    <property type="match status" value="1"/>
</dbReference>
<dbReference type="PANTHER" id="PTHR34653">
    <property type="match status" value="1"/>
</dbReference>
<dbReference type="PANTHER" id="PTHR34653:SF1">
    <property type="entry name" value="FLAGELLAR HOOK-BASAL BODY COMPLEX PROTEIN FLIE"/>
    <property type="match status" value="1"/>
</dbReference>
<dbReference type="Pfam" id="PF02049">
    <property type="entry name" value="FliE"/>
    <property type="match status" value="1"/>
</dbReference>
<dbReference type="PRINTS" id="PR01006">
    <property type="entry name" value="FLGHOOKFLIE"/>
</dbReference>
<feature type="chain" id="PRO_0000105538" description="Flagellar hook-basal body complex protein FliE">
    <location>
        <begin position="1"/>
        <end position="114"/>
    </location>
</feature>